<sequence length="123" mass="14203">MQNKIQVKSVEKRENALIFCAENSEIEVKELSARNHVLVDSDNLSFLYILENESSFIYVSIPHTCWEAMHEAMNNDVVMFVRVNDIEMELEGLKEEVEYLVENIEGNANYGEELVTAVEKVFL</sequence>
<name>Y1319_BACC1</name>
<reference key="1">
    <citation type="journal article" date="2004" name="Nucleic Acids Res.">
        <title>The genome sequence of Bacillus cereus ATCC 10987 reveals metabolic adaptations and a large plasmid related to Bacillus anthracis pXO1.</title>
        <authorList>
            <person name="Rasko D.A."/>
            <person name="Ravel J."/>
            <person name="Oekstad O.A."/>
            <person name="Helgason E."/>
            <person name="Cer R.Z."/>
            <person name="Jiang L."/>
            <person name="Shores K.A."/>
            <person name="Fouts D.E."/>
            <person name="Tourasse N.J."/>
            <person name="Angiuoli S.V."/>
            <person name="Kolonay J.F."/>
            <person name="Nelson W.C."/>
            <person name="Kolstoe A.-B."/>
            <person name="Fraser C.M."/>
            <person name="Read T.D."/>
        </authorList>
    </citation>
    <scope>NUCLEOTIDE SEQUENCE [LARGE SCALE GENOMIC DNA]</scope>
    <source>
        <strain>ATCC 10987 / NRS 248</strain>
    </source>
</reference>
<accession>Q73BU9</accession>
<evidence type="ECO:0000255" key="1">
    <source>
        <dbReference type="HAMAP-Rule" id="MF_01861"/>
    </source>
</evidence>
<gene>
    <name type="ordered locus">BCE_1319</name>
</gene>
<feature type="chain" id="PRO_0000369640" description="UPF0738 protein BCE_1319">
    <location>
        <begin position="1"/>
        <end position="123"/>
    </location>
</feature>
<organism>
    <name type="scientific">Bacillus cereus (strain ATCC 10987 / NRS 248)</name>
    <dbReference type="NCBI Taxonomy" id="222523"/>
    <lineage>
        <taxon>Bacteria</taxon>
        <taxon>Bacillati</taxon>
        <taxon>Bacillota</taxon>
        <taxon>Bacilli</taxon>
        <taxon>Bacillales</taxon>
        <taxon>Bacillaceae</taxon>
        <taxon>Bacillus</taxon>
        <taxon>Bacillus cereus group</taxon>
    </lineage>
</organism>
<comment type="similarity">
    <text evidence="1">Belongs to the UPF0738 family.</text>
</comment>
<protein>
    <recommendedName>
        <fullName evidence="1">UPF0738 protein BCE_1319</fullName>
    </recommendedName>
</protein>
<dbReference type="EMBL" id="AE017194">
    <property type="protein sequence ID" value="AAS40248.1"/>
    <property type="molecule type" value="Genomic_DNA"/>
</dbReference>
<dbReference type="KEGG" id="bca:BCE_1319"/>
<dbReference type="HOGENOM" id="CLU_142282_0_0_9"/>
<dbReference type="Proteomes" id="UP000002527">
    <property type="component" value="Chromosome"/>
</dbReference>
<dbReference type="HAMAP" id="MF_01861">
    <property type="entry name" value="UPF0738"/>
    <property type="match status" value="1"/>
</dbReference>
<dbReference type="InterPro" id="IPR020908">
    <property type="entry name" value="UPF0738"/>
</dbReference>
<dbReference type="Pfam" id="PF19785">
    <property type="entry name" value="UPF0738"/>
    <property type="match status" value="1"/>
</dbReference>
<proteinExistence type="inferred from homology"/>